<keyword id="KW-0238">DNA-binding</keyword>
<keyword id="KW-0479">Metal-binding</keyword>
<keyword id="KW-0539">Nucleus</keyword>
<keyword id="KW-0675">Receptor</keyword>
<keyword id="KW-1185">Reference proteome</keyword>
<keyword id="KW-0804">Transcription</keyword>
<keyword id="KW-0805">Transcription regulation</keyword>
<keyword id="KW-0862">Zinc</keyword>
<keyword id="KW-0863">Zinc-finger</keyword>
<feature type="chain" id="PRO_0000437683" description="Nuclear hormone receptor family member nhr-60" evidence="6">
    <location>
        <begin position="1"/>
        <end position="443"/>
    </location>
</feature>
<feature type="domain" description="NR LBD" evidence="2">
    <location>
        <begin position="196"/>
        <end position="439"/>
    </location>
</feature>
<feature type="DNA-binding region" description="Nuclear receptor" evidence="1">
    <location>
        <begin position="44"/>
        <end position="121"/>
    </location>
</feature>
<feature type="zinc finger region" description="NR C4-type" evidence="1">
    <location>
        <begin position="47"/>
        <end position="67"/>
    </location>
</feature>
<feature type="zinc finger region" description="NR C4-type" evidence="1">
    <location>
        <begin position="83"/>
        <end position="104"/>
    </location>
</feature>
<feature type="region of interest" description="Disordered" evidence="4">
    <location>
        <begin position="1"/>
        <end position="40"/>
    </location>
</feature>
<feature type="region of interest" description="Disordered" evidence="4">
    <location>
        <begin position="225"/>
        <end position="249"/>
    </location>
</feature>
<feature type="compositionally biased region" description="Low complexity" evidence="4">
    <location>
        <begin position="1"/>
        <end position="20"/>
    </location>
</feature>
<feature type="compositionally biased region" description="Pro residues" evidence="4">
    <location>
        <begin position="233"/>
        <end position="242"/>
    </location>
</feature>
<feature type="sequence conflict" description="In Ref. 3; AAG15157." evidence="6" ref="3">
    <original>N</original>
    <variation>S</variation>
    <location>
        <position position="322"/>
    </location>
</feature>
<reference evidence="6" key="1">
    <citation type="journal article" date="2007" name="Folia Biol. (Praha)">
        <title>Supplementary nuclear receptor NHR-60 is required for normal embryonic and early larval development of Caenorhabditis elegans.</title>
        <authorList>
            <person name="Simeckova K."/>
            <person name="Brozova E."/>
            <person name="Vohanka J."/>
            <person name="Pohludka M."/>
            <person name="Kostrouch Z."/>
            <person name="Krause M.W."/>
            <person name="Rall J.E."/>
            <person name="Kostrouchova M."/>
        </authorList>
    </citation>
    <scope>NUCLEOTIDE SEQUENCE [MRNA]</scope>
    <scope>FUNCTION</scope>
    <scope>SUBCELLULAR LOCATION</scope>
    <scope>DEVELOPMENTAL STAGE</scope>
    <scope>DISRUPTION PHENOTYPE</scope>
</reference>
<reference evidence="9" key="2">
    <citation type="journal article" date="1998" name="Science">
        <title>Genome sequence of the nematode C. elegans: a platform for investigating biology.</title>
        <authorList>
            <consortium name="The C. elegans sequencing consortium"/>
        </authorList>
    </citation>
    <scope>NUCLEOTIDE SEQUENCE [LARGE SCALE GENOMIC DNA]</scope>
    <source>
        <strain evidence="9">Bristol N2</strain>
    </source>
</reference>
<reference evidence="8" key="3">
    <citation type="journal article" date="2005" name="J. Mol. Evol.">
        <title>Explosive lineage-specific expansion of the orphan nuclear receptor HNF4 in nematodes.</title>
        <authorList>
            <person name="Robinson-Rechavi M."/>
            <person name="Maina C.V."/>
            <person name="Gissendanner C.R."/>
            <person name="Laudet V."/>
            <person name="Sluder A."/>
        </authorList>
    </citation>
    <scope>NUCLEOTIDE SEQUENCE [MRNA] OF 2-443</scope>
</reference>
<name>NHR60_CAEEL</name>
<protein>
    <recommendedName>
        <fullName evidence="10">Nuclear hormone receptor family member nhr-60</fullName>
    </recommendedName>
</protein>
<dbReference type="EMBL" id="AF273808">
    <property type="protein sequence ID" value="AAG15157.1"/>
    <property type="molecule type" value="mRNA"/>
</dbReference>
<dbReference type="EMBL" id="BX284605">
    <property type="protein sequence ID" value="CAB09422.1"/>
    <property type="molecule type" value="Genomic_DNA"/>
</dbReference>
<dbReference type="PIR" id="T22817">
    <property type="entry name" value="T22817"/>
</dbReference>
<dbReference type="RefSeq" id="NP_506930.1">
    <property type="nucleotide sequence ID" value="NM_074529.4"/>
</dbReference>
<dbReference type="DIP" id="DIP-27121N"/>
<dbReference type="FunCoup" id="O17898">
    <property type="interactions" value="184"/>
</dbReference>
<dbReference type="STRING" id="6239.F57A10.5.1"/>
<dbReference type="PaxDb" id="6239-F57A10.5"/>
<dbReference type="EnsemblMetazoa" id="F57A10.5.1">
    <property type="protein sequence ID" value="F57A10.5.1"/>
    <property type="gene ID" value="WBGene00003650"/>
</dbReference>
<dbReference type="GeneID" id="180059"/>
<dbReference type="KEGG" id="cel:CELE_F57A10.5"/>
<dbReference type="UCSC" id="F57A10.5">
    <property type="organism name" value="c. elegans"/>
</dbReference>
<dbReference type="AGR" id="WB:WBGene00003650"/>
<dbReference type="CTD" id="180059"/>
<dbReference type="WormBase" id="F57A10.5">
    <property type="protein sequence ID" value="CE16151"/>
    <property type="gene ID" value="WBGene00003650"/>
    <property type="gene designation" value="nhr-60"/>
</dbReference>
<dbReference type="eggNOG" id="ENOG502TFFE">
    <property type="taxonomic scope" value="Eukaryota"/>
</dbReference>
<dbReference type="GeneTree" id="ENSGT00970000195878"/>
<dbReference type="HOGENOM" id="CLU_007368_3_1_1"/>
<dbReference type="InParanoid" id="O17898"/>
<dbReference type="OrthoDB" id="9984314at2759"/>
<dbReference type="PhylomeDB" id="O17898"/>
<dbReference type="Reactome" id="R-CEL-383280">
    <property type="pathway name" value="Nuclear Receptor transcription pathway"/>
</dbReference>
<dbReference type="Reactome" id="R-CEL-5362517">
    <property type="pathway name" value="Signaling by Retinoic Acid"/>
</dbReference>
<dbReference type="PRO" id="PR:O17898"/>
<dbReference type="Proteomes" id="UP000001940">
    <property type="component" value="Chromosome V"/>
</dbReference>
<dbReference type="Bgee" id="WBGene00003650">
    <property type="expression patterns" value="Expressed in pharyngeal muscle cell (C elegans) and 3 other cell types or tissues"/>
</dbReference>
<dbReference type="GO" id="GO:0005635">
    <property type="term" value="C:nuclear envelope"/>
    <property type="evidence" value="ECO:0000314"/>
    <property type="project" value="WormBase"/>
</dbReference>
<dbReference type="GO" id="GO:0004879">
    <property type="term" value="F:nuclear receptor activity"/>
    <property type="evidence" value="ECO:0000318"/>
    <property type="project" value="GO_Central"/>
</dbReference>
<dbReference type="GO" id="GO:0000978">
    <property type="term" value="F:RNA polymerase II cis-regulatory region sequence-specific DNA binding"/>
    <property type="evidence" value="ECO:0000318"/>
    <property type="project" value="GO_Central"/>
</dbReference>
<dbReference type="GO" id="GO:0008270">
    <property type="term" value="F:zinc ion binding"/>
    <property type="evidence" value="ECO:0007669"/>
    <property type="project" value="UniProtKB-KW"/>
</dbReference>
<dbReference type="GO" id="GO:0030154">
    <property type="term" value="P:cell differentiation"/>
    <property type="evidence" value="ECO:0000318"/>
    <property type="project" value="GO_Central"/>
</dbReference>
<dbReference type="GO" id="GO:0006357">
    <property type="term" value="P:regulation of transcription by RNA polymerase II"/>
    <property type="evidence" value="ECO:0000318"/>
    <property type="project" value="GO_Central"/>
</dbReference>
<dbReference type="CDD" id="cd06960">
    <property type="entry name" value="NR_DBD_HNF4A"/>
    <property type="match status" value="1"/>
</dbReference>
<dbReference type="FunFam" id="1.10.565.10:FF:000053">
    <property type="entry name" value="Nuclear Hormone Receptor family"/>
    <property type="match status" value="1"/>
</dbReference>
<dbReference type="FunFam" id="3.30.50.10:FF:000030">
    <property type="entry name" value="Nuclear Hormone Receptor family"/>
    <property type="match status" value="1"/>
</dbReference>
<dbReference type="Gene3D" id="3.30.50.10">
    <property type="entry name" value="Erythroid Transcription Factor GATA-1, subunit A"/>
    <property type="match status" value="1"/>
</dbReference>
<dbReference type="Gene3D" id="1.10.565.10">
    <property type="entry name" value="Retinoid X Receptor"/>
    <property type="match status" value="1"/>
</dbReference>
<dbReference type="InterPro" id="IPR049636">
    <property type="entry name" value="HNF4-like_DBD"/>
</dbReference>
<dbReference type="InterPro" id="IPR035500">
    <property type="entry name" value="NHR-like_dom_sf"/>
</dbReference>
<dbReference type="InterPro" id="IPR000536">
    <property type="entry name" value="Nucl_hrmn_rcpt_lig-bd"/>
</dbReference>
<dbReference type="InterPro" id="IPR050274">
    <property type="entry name" value="Nuclear_hormone_rcpt_NR2"/>
</dbReference>
<dbReference type="InterPro" id="IPR001628">
    <property type="entry name" value="Znf_hrmn_rcpt"/>
</dbReference>
<dbReference type="InterPro" id="IPR013088">
    <property type="entry name" value="Znf_NHR/GATA"/>
</dbReference>
<dbReference type="PANTHER" id="PTHR24083">
    <property type="entry name" value="NUCLEAR HORMONE RECEPTOR"/>
    <property type="match status" value="1"/>
</dbReference>
<dbReference type="Pfam" id="PF00104">
    <property type="entry name" value="Hormone_recep"/>
    <property type="match status" value="1"/>
</dbReference>
<dbReference type="Pfam" id="PF00105">
    <property type="entry name" value="zf-C4"/>
    <property type="match status" value="1"/>
</dbReference>
<dbReference type="PRINTS" id="PR00047">
    <property type="entry name" value="STROIDFINGER"/>
</dbReference>
<dbReference type="SMART" id="SM00430">
    <property type="entry name" value="HOLI"/>
    <property type="match status" value="1"/>
</dbReference>
<dbReference type="SMART" id="SM00399">
    <property type="entry name" value="ZnF_C4"/>
    <property type="match status" value="1"/>
</dbReference>
<dbReference type="SUPFAM" id="SSF57716">
    <property type="entry name" value="Glucocorticoid receptor-like (DNA-binding domain)"/>
    <property type="match status" value="1"/>
</dbReference>
<dbReference type="SUPFAM" id="SSF48508">
    <property type="entry name" value="Nuclear receptor ligand-binding domain"/>
    <property type="match status" value="1"/>
</dbReference>
<dbReference type="PROSITE" id="PS51843">
    <property type="entry name" value="NR_LBD"/>
    <property type="match status" value="1"/>
</dbReference>
<dbReference type="PROSITE" id="PS00031">
    <property type="entry name" value="NUCLEAR_REC_DBD_1"/>
    <property type="match status" value="1"/>
</dbReference>
<dbReference type="PROSITE" id="PS51030">
    <property type="entry name" value="NUCLEAR_REC_DBD_2"/>
    <property type="match status" value="1"/>
</dbReference>
<sequence>MIQSSSSISQDSLDLPSILSTFSADEPEDEPSPTAVKSTKPQRPTECLICGNSANGHHYDVASCNGCKTFFRRMCVSDRSFECKAKGDCFDLTKRKVPLKCRACRHQKCISVGMNPLAMEVDEKAASSSNFKKLVKRAQDLEPDDDCQVTAVVNKMQIVKPVDSIESKMQNITDMLVYLETKVERFRKSAYNPHWNEFSGLEYLLESECRIGFGDRFGPMPGWPLRRDQLGPPRLPKPPSPGKPRDSQHSQNIKQWFFYNLLTTVEYAKTFMFFHRLSSRDKLILTRHVALACTNLHISYSSIRRNLEVIIEPDGSEPMTFNDTHYSASVMSVAPLIRCQIKNIEYLLLKAIVLCNPAVPDLSAKSQEIISLERVKYADALFNYCLRSRSDGPPHFAQLIQIIDVLERQQRMQKDLHLLLVAPKVAKLPKDLVMRVIEDIMDS</sequence>
<proteinExistence type="evidence at transcript level"/>
<evidence type="ECO:0000255" key="1">
    <source>
        <dbReference type="PROSITE-ProRule" id="PRU00407"/>
    </source>
</evidence>
<evidence type="ECO:0000255" key="2">
    <source>
        <dbReference type="PROSITE-ProRule" id="PRU01189"/>
    </source>
</evidence>
<evidence type="ECO:0000255" key="3">
    <source>
        <dbReference type="RuleBase" id="RU004334"/>
    </source>
</evidence>
<evidence type="ECO:0000256" key="4">
    <source>
        <dbReference type="SAM" id="MobiDB-lite"/>
    </source>
</evidence>
<evidence type="ECO:0000269" key="5">
    <source>
    </source>
</evidence>
<evidence type="ECO:0000305" key="6"/>
<evidence type="ECO:0000305" key="7">
    <source>
    </source>
</evidence>
<evidence type="ECO:0000312" key="8">
    <source>
        <dbReference type="EMBL" id="AAG15157.1"/>
    </source>
</evidence>
<evidence type="ECO:0000312" key="9">
    <source>
        <dbReference type="Proteomes" id="UP000001940"/>
    </source>
</evidence>
<evidence type="ECO:0000312" key="10">
    <source>
        <dbReference type="WormBase" id="F57A10.5"/>
    </source>
</evidence>
<accession>O17898</accession>
<accession>Q9GTF1</accession>
<organism evidence="9">
    <name type="scientific">Caenorhabditis elegans</name>
    <dbReference type="NCBI Taxonomy" id="6239"/>
    <lineage>
        <taxon>Eukaryota</taxon>
        <taxon>Metazoa</taxon>
        <taxon>Ecdysozoa</taxon>
        <taxon>Nematoda</taxon>
        <taxon>Chromadorea</taxon>
        <taxon>Rhabditida</taxon>
        <taxon>Rhabditina</taxon>
        <taxon>Rhabditomorpha</taxon>
        <taxon>Rhabditoidea</taxon>
        <taxon>Rhabditidae</taxon>
        <taxon>Peloderinae</taxon>
        <taxon>Caenorhabditis</taxon>
    </lineage>
</organism>
<gene>
    <name evidence="10" type="primary">nhr-60</name>
    <name evidence="10" type="ORF">F57A10.5</name>
</gene>
<comment type="function">
    <text evidence="5 7">Orphan nuclear receptor (Potential). Required for embryonic and larval morphogenesis and probably for seam cell positioning and migration.</text>
</comment>
<comment type="subcellular location">
    <subcellularLocation>
        <location evidence="5">Nucleus</location>
    </subcellularLocation>
    <text evidence="5">Localized in the nucleus from the one-cell stage of development onwards. Localizes to the nuclear periphery of all cells.</text>
</comment>
<comment type="developmental stage">
    <text evidence="5">Expressed from embryogenesis onwards with high expression during the larval stages of development, peaking at the L3 stage and decreasing at the L4 stage of larval development. Ubiquitously expressed, but expression in seam cells begins in embryonic precursors soon after fertilization and is most prominent in larval stages of development. Expression is also prominent in the germ line during the L1 stage of larval development. Also expressed in pharyngeal gland cells, VC4 and VC5 neurons, and in the hermaphrodite uterine vulval uv1 cells.</text>
</comment>
<comment type="disruption phenotype">
    <text evidence="5">RNAi-mediated knockdown results in arrest at the two-fold stage of embryogenesis in the majority of embryos. These embryos have incomplete ventral closure and morphological defects including elongation defects, and either absent or irregularly placed seam cells in the head and tail regions. Surviving larvae also exhibit morphological defects and contain vacuoles.</text>
</comment>
<comment type="similarity">
    <text evidence="3">Belongs to the nuclear hormone receptor family.</text>
</comment>